<proteinExistence type="evidence at protein level"/>
<gene>
    <name type="primary">arnB</name>
    <name type="synonym">pbgP</name>
    <name type="synonym">pbgP1</name>
    <name type="synonym">pmrH</name>
    <name type="ordered locus">STM2297</name>
</gene>
<accession>Q8ZNF3</accession>
<accession>O52323</accession>
<keyword id="KW-0002">3D-structure</keyword>
<keyword id="KW-0032">Aminotransferase</keyword>
<keyword id="KW-0046">Antibiotic resistance</keyword>
<keyword id="KW-0441">Lipid A biosynthesis</keyword>
<keyword id="KW-0444">Lipid biosynthesis</keyword>
<keyword id="KW-0443">Lipid metabolism</keyword>
<keyword id="KW-0448">Lipopolysaccharide biosynthesis</keyword>
<keyword id="KW-0663">Pyridoxal phosphate</keyword>
<keyword id="KW-1185">Reference proteome</keyword>
<keyword id="KW-0808">Transferase</keyword>
<reference key="1">
    <citation type="journal article" date="1998" name="Mol. Microbiol.">
        <title>PmrA-PmrB-regulated genes necessary for 4-aminoarabinose lipid A modification and polymyxin resistance.</title>
        <authorList>
            <person name="Gunn J.S."/>
            <person name="Lim K.B."/>
            <person name="Krueger J."/>
            <person name="Kim K."/>
            <person name="Guo L."/>
            <person name="Hackett M."/>
            <person name="Miller S.I."/>
        </authorList>
    </citation>
    <scope>NUCLEOTIDE SEQUENCE [GENOMIC DNA]</scope>
    <source>
        <strain>ATCC 14028s / SGSG 2262</strain>
    </source>
</reference>
<reference key="2">
    <citation type="journal article" date="2001" name="Nature">
        <title>Complete genome sequence of Salmonella enterica serovar Typhimurium LT2.</title>
        <authorList>
            <person name="McClelland M."/>
            <person name="Sanderson K.E."/>
            <person name="Spieth J."/>
            <person name="Clifton S.W."/>
            <person name="Latreille P."/>
            <person name="Courtney L."/>
            <person name="Porwollik S."/>
            <person name="Ali J."/>
            <person name="Dante M."/>
            <person name="Du F."/>
            <person name="Hou S."/>
            <person name="Layman D."/>
            <person name="Leonard S."/>
            <person name="Nguyen C."/>
            <person name="Scott K."/>
            <person name="Holmes A."/>
            <person name="Grewal N."/>
            <person name="Mulvaney E."/>
            <person name="Ryan E."/>
            <person name="Sun H."/>
            <person name="Florea L."/>
            <person name="Miller W."/>
            <person name="Stoneking T."/>
            <person name="Nhan M."/>
            <person name="Waterston R."/>
            <person name="Wilson R.K."/>
        </authorList>
    </citation>
    <scope>NUCLEOTIDE SEQUENCE [LARGE SCALE GENOMIC DNA]</scope>
    <source>
        <strain>LT2 / SGSC1412 / ATCC 700720</strain>
    </source>
</reference>
<reference key="3">
    <citation type="journal article" date="1999" name="J. Biol. Chem.">
        <title>Molecular characterization of the PmrA regulon.</title>
        <authorList>
            <person name="Woesten M.M.S.M."/>
            <person name="Groisman E.A."/>
        </authorList>
    </citation>
    <scope>INDUCTION</scope>
    <source>
        <strain>ATCC 14028s / SGSG 2262</strain>
    </source>
</reference>
<reference evidence="8 9 10" key="4">
    <citation type="journal article" date="2002" name="Structure">
        <title>Structural studies of Salmonella typhimurium ArnB (PmrH) aminotransferase: a 4-amino-4-deoxy-L-arabinose lipopolysaccharide-modifying enzyme.</title>
        <authorList>
            <person name="Noland B.W."/>
            <person name="Newman J.M."/>
            <person name="Hendle J."/>
            <person name="Badger J."/>
            <person name="Christopher J.A."/>
            <person name="Tresser J."/>
            <person name="Buchanan M.D."/>
            <person name="Wright T.A."/>
            <person name="Rutter M.E."/>
            <person name="Sanderson W.E."/>
            <person name="Mueller-Dieckmann H.-J."/>
            <person name="Gajiwala K.S."/>
            <person name="Buchanan S.G."/>
        </authorList>
    </citation>
    <scope>X-RAY CRYSTALLOGRAPHY (1.7 ANGSTROMS) IN COMPLEX WITH PYRIDOXAL PHOSPHATE AND INHIBITOR</scope>
    <scope>FUNCTION</scope>
    <scope>CATALYTIC ACTIVITY</scope>
    <scope>ACTIVITY REGULATION</scope>
    <scope>ACTIVE SITE</scope>
    <scope>SUBUNIT</scope>
</reference>
<reference evidence="11" key="5">
    <citation type="journal article" date="2014" name="Biochemistry">
        <title>Structural basis for substrate specificity in ArnB. A key enzyme in the polymyxin resistance pathway of Gram-negative bacteria.</title>
        <authorList>
            <person name="Lee M."/>
            <person name="Sousa M.C."/>
        </authorList>
    </citation>
    <scope>X-RAY CRYSTALLOGRAPHY (2.3 ANGSTROMS) OF MUTANT ALA-188 IN COMPLEX WITH PYRIDOXAL PHOSPHATE AND SUBSTRATE</scope>
    <scope>FUNCTION</scope>
    <scope>ACTIVE SITE</scope>
    <scope>REACTION MECHANISM</scope>
    <scope>SUBUNIT</scope>
    <scope>MUTAGENESIS OF LYS-188</scope>
</reference>
<comment type="function">
    <text evidence="1 3 4">Catalyzes the conversion of UDP-4-keto-arabinose (UDP-Ara4O) to UDP-4-amino-4-deoxy-L-arabinose (UDP-L-Ara4N) (PubMed:12429098, PubMed:24460375). The modified arabinose is attached to lipid A and is required for resistance to polymyxin and cationic antimicrobial peptides (By similarity).</text>
</comment>
<comment type="catalytic activity">
    <reaction evidence="3">
        <text>UDP-4-amino-4-deoxy-beta-L-arabinose + 2-oxoglutarate = UDP-beta-L-threo-pentopyranos-4-ulose + L-glutamate</text>
        <dbReference type="Rhea" id="RHEA:24710"/>
        <dbReference type="ChEBI" id="CHEBI:16810"/>
        <dbReference type="ChEBI" id="CHEBI:29985"/>
        <dbReference type="ChEBI" id="CHEBI:58708"/>
        <dbReference type="ChEBI" id="CHEBI:58710"/>
        <dbReference type="EC" id="2.6.1.87"/>
    </reaction>
</comment>
<comment type="cofactor">
    <cofactor evidence="3">
        <name>pyridoxal 5'-phosphate</name>
        <dbReference type="ChEBI" id="CHEBI:597326"/>
    </cofactor>
</comment>
<comment type="activity regulation">
    <text evidence="3">Inhibited by L-cycloserine.</text>
</comment>
<comment type="pathway">
    <text>Nucleotide-sugar biosynthesis; UDP-4-deoxy-4-formamido-beta-L-arabinose biosynthesis; UDP-4-deoxy-4-formamido-beta-L-arabinose from UDP-alpha-D-glucuronate: step 2/3.</text>
</comment>
<comment type="pathway">
    <text>Bacterial outer membrane biogenesis; lipopolysaccharide biosynthesis.</text>
</comment>
<comment type="subunit">
    <text evidence="3 4">Homodimer.</text>
</comment>
<comment type="induction">
    <text evidence="2">Induced by BasR.</text>
</comment>
<comment type="similarity">
    <text evidence="5">Belongs to the DegT/DnrJ/EryC1 family. ArnB subfamily.</text>
</comment>
<feature type="chain" id="PRO_0000110028" description="UDP-4-amino-4-deoxy-L-arabinose--oxoglutarate aminotransferase">
    <location>
        <begin position="1"/>
        <end position="385"/>
    </location>
</feature>
<feature type="active site" description="Proton acceptor" evidence="6 7">
    <location>
        <position position="188"/>
    </location>
</feature>
<feature type="modified residue" description="N6-(pyridoxal phosphate)lysine" evidence="3 9 10">
    <location>
        <position position="188"/>
    </location>
</feature>
<feature type="mutagenesis site" description="Loss of covalent pyridoxal phosphate binding." evidence="4">
    <original>K</original>
    <variation>A</variation>
    <location>
        <position position="188"/>
    </location>
</feature>
<feature type="sequence conflict" description="In Ref. 2; AAC04770." evidence="5" ref="2">
    <original>L</original>
    <variation>V</variation>
    <location>
        <position position="285"/>
    </location>
</feature>
<feature type="helix" evidence="12">
    <location>
        <begin position="20"/>
        <end position="32"/>
    </location>
</feature>
<feature type="strand" evidence="12">
    <location>
        <begin position="36"/>
        <end position="38"/>
    </location>
</feature>
<feature type="helix" evidence="12">
    <location>
        <begin position="39"/>
        <end position="52"/>
    </location>
</feature>
<feature type="strand" evidence="12">
    <location>
        <begin position="55"/>
        <end position="61"/>
    </location>
</feature>
<feature type="helix" evidence="12">
    <location>
        <begin position="63"/>
        <end position="73"/>
    </location>
</feature>
<feature type="strand" evidence="12">
    <location>
        <begin position="81"/>
        <end position="88"/>
    </location>
</feature>
<feature type="helix" evidence="12">
    <location>
        <begin position="90"/>
        <end position="98"/>
    </location>
</feature>
<feature type="strand" evidence="12">
    <location>
        <begin position="102"/>
        <end position="106"/>
    </location>
</feature>
<feature type="turn" evidence="12">
    <location>
        <begin position="110"/>
        <end position="112"/>
    </location>
</feature>
<feature type="helix" evidence="12">
    <location>
        <begin position="117"/>
        <end position="123"/>
    </location>
</feature>
<feature type="strand" evidence="12">
    <location>
        <begin position="128"/>
        <end position="131"/>
    </location>
</feature>
<feature type="helix" evidence="12">
    <location>
        <begin position="136"/>
        <end position="138"/>
    </location>
</feature>
<feature type="helix" evidence="12">
    <location>
        <begin position="143"/>
        <end position="153"/>
    </location>
</feature>
<feature type="strand" evidence="13">
    <location>
        <begin position="157"/>
        <end position="160"/>
    </location>
</feature>
<feature type="strand" evidence="12">
    <location>
        <begin position="176"/>
        <end position="183"/>
    </location>
</feature>
<feature type="strand" evidence="12">
    <location>
        <begin position="188"/>
        <end position="190"/>
    </location>
</feature>
<feature type="strand" evidence="12">
    <location>
        <begin position="192"/>
        <end position="194"/>
    </location>
</feature>
<feature type="strand" evidence="12">
    <location>
        <begin position="196"/>
        <end position="201"/>
    </location>
</feature>
<feature type="helix" evidence="12">
    <location>
        <begin position="203"/>
        <end position="212"/>
    </location>
</feature>
<feature type="strand" evidence="12">
    <location>
        <begin position="234"/>
        <end position="237"/>
    </location>
</feature>
<feature type="helix" evidence="12">
    <location>
        <begin position="246"/>
        <end position="257"/>
    </location>
</feature>
<feature type="helix" evidence="12">
    <location>
        <begin position="259"/>
        <end position="278"/>
    </location>
</feature>
<feature type="strand" evidence="12">
    <location>
        <begin position="299"/>
        <end position="302"/>
    </location>
</feature>
<feature type="helix" evidence="12">
    <location>
        <begin position="305"/>
        <end position="308"/>
    </location>
</feature>
<feature type="helix" evidence="12">
    <location>
        <begin position="312"/>
        <end position="321"/>
    </location>
</feature>
<feature type="helix" evidence="12">
    <location>
        <begin position="333"/>
        <end position="335"/>
    </location>
</feature>
<feature type="helix" evidence="12">
    <location>
        <begin position="337"/>
        <end position="342"/>
    </location>
</feature>
<feature type="helix" evidence="12">
    <location>
        <begin position="349"/>
        <end position="355"/>
    </location>
</feature>
<feature type="strand" evidence="12">
    <location>
        <begin position="358"/>
        <end position="361"/>
    </location>
</feature>
<feature type="helix" evidence="12">
    <location>
        <begin position="369"/>
        <end position="383"/>
    </location>
</feature>
<name>ARNB_SALTY</name>
<protein>
    <recommendedName>
        <fullName>UDP-4-amino-4-deoxy-L-arabinose--oxoglutarate aminotransferase</fullName>
        <ecNumber evidence="3">2.6.1.87</ecNumber>
    </recommendedName>
    <alternativeName>
        <fullName>Polymyxin resistance protein PmrH</fullName>
    </alternativeName>
    <alternativeName>
        <fullName>UDP-(beta-L-threo-pentapyranosyl-4''-ulose diphosphate) aminotransferase</fullName>
        <shortName>UDP-Ara4O aminotransferase</shortName>
    </alternativeName>
    <alternativeName>
        <fullName>UDP-4-amino-4-deoxy-L-arabinose aminotransferase</fullName>
    </alternativeName>
</protein>
<evidence type="ECO:0000250" key="1"/>
<evidence type="ECO:0000269" key="2">
    <source>
    </source>
</evidence>
<evidence type="ECO:0000269" key="3">
    <source>
    </source>
</evidence>
<evidence type="ECO:0000269" key="4">
    <source>
    </source>
</evidence>
<evidence type="ECO:0000305" key="5"/>
<evidence type="ECO:0000305" key="6">
    <source>
    </source>
</evidence>
<evidence type="ECO:0000305" key="7">
    <source>
    </source>
</evidence>
<evidence type="ECO:0007744" key="8">
    <source>
        <dbReference type="PDB" id="1MDO"/>
    </source>
</evidence>
<evidence type="ECO:0007744" key="9">
    <source>
        <dbReference type="PDB" id="1MDX"/>
    </source>
</evidence>
<evidence type="ECO:0007744" key="10">
    <source>
        <dbReference type="PDB" id="1MDZ"/>
    </source>
</evidence>
<evidence type="ECO:0007744" key="11">
    <source>
        <dbReference type="PDB" id="4OCA"/>
    </source>
</evidence>
<evidence type="ECO:0007829" key="12">
    <source>
        <dbReference type="PDB" id="1MDO"/>
    </source>
</evidence>
<evidence type="ECO:0007829" key="13">
    <source>
        <dbReference type="PDB" id="1MDZ"/>
    </source>
</evidence>
<dbReference type="EC" id="2.6.1.87" evidence="3"/>
<dbReference type="EMBL" id="AF036677">
    <property type="protein sequence ID" value="AAC04770.1"/>
    <property type="molecule type" value="Genomic_DNA"/>
</dbReference>
<dbReference type="EMBL" id="AE006468">
    <property type="protein sequence ID" value="AAL21198.1"/>
    <property type="molecule type" value="Genomic_DNA"/>
</dbReference>
<dbReference type="RefSeq" id="WP_001520579.1">
    <property type="nucleotide sequence ID" value="NC_003197.2"/>
</dbReference>
<dbReference type="PDB" id="1MDO">
    <property type="method" value="X-ray"/>
    <property type="resolution" value="1.70 A"/>
    <property type="chains" value="A=1-385"/>
</dbReference>
<dbReference type="PDB" id="1MDX">
    <property type="method" value="X-ray"/>
    <property type="resolution" value="1.96 A"/>
    <property type="chains" value="A=1-385"/>
</dbReference>
<dbReference type="PDB" id="1MDZ">
    <property type="method" value="X-ray"/>
    <property type="resolution" value="2.07 A"/>
    <property type="chains" value="A=1-385"/>
</dbReference>
<dbReference type="PDB" id="4OCA">
    <property type="method" value="X-ray"/>
    <property type="resolution" value="2.30 A"/>
    <property type="chains" value="A=1-385"/>
</dbReference>
<dbReference type="PDBsum" id="1MDO"/>
<dbReference type="PDBsum" id="1MDX"/>
<dbReference type="PDBsum" id="1MDZ"/>
<dbReference type="PDBsum" id="4OCA"/>
<dbReference type="SMR" id="Q8ZNF3"/>
<dbReference type="STRING" id="99287.STM2297"/>
<dbReference type="DrugBank" id="DB02038">
    <property type="generic name" value="D-[3-hydroxy-2-methyl-5-phosphonooxymethyl-pyridin-4-ylmethyl]-N,O-cycloserylamide"/>
</dbReference>
<dbReference type="DrugBank" id="DB02142">
    <property type="generic name" value="Pyridoxamine-5'-Phosphate"/>
</dbReference>
<dbReference type="PaxDb" id="99287-STM2297"/>
<dbReference type="KEGG" id="stm:STM2297"/>
<dbReference type="HOGENOM" id="CLU_033332_0_3_6"/>
<dbReference type="PhylomeDB" id="Q8ZNF3"/>
<dbReference type="BioCyc" id="SENT99287:STM2297-MONOMER"/>
<dbReference type="UniPathway" id="UPA00030"/>
<dbReference type="UniPathway" id="UPA00032">
    <property type="reaction ID" value="UER00493"/>
</dbReference>
<dbReference type="EvolutionaryTrace" id="Q8ZNF3"/>
<dbReference type="Proteomes" id="UP000001014">
    <property type="component" value="Chromosome"/>
</dbReference>
<dbReference type="GO" id="GO:0016020">
    <property type="term" value="C:membrane"/>
    <property type="evidence" value="ECO:0007669"/>
    <property type="project" value="GOC"/>
</dbReference>
<dbReference type="GO" id="GO:0030170">
    <property type="term" value="F:pyridoxal phosphate binding"/>
    <property type="evidence" value="ECO:0000318"/>
    <property type="project" value="GO_Central"/>
</dbReference>
<dbReference type="GO" id="GO:0008483">
    <property type="term" value="F:transaminase activity"/>
    <property type="evidence" value="ECO:0000318"/>
    <property type="project" value="GO_Central"/>
</dbReference>
<dbReference type="GO" id="GO:0099620">
    <property type="term" value="F:UDP-4-amino-4-deoxy-L-arabinose aminotransferase"/>
    <property type="evidence" value="ECO:0007669"/>
    <property type="project" value="UniProtKB-EC"/>
</dbReference>
<dbReference type="GO" id="GO:0009245">
    <property type="term" value="P:lipid A biosynthetic process"/>
    <property type="evidence" value="ECO:0007669"/>
    <property type="project" value="UniProtKB-KW"/>
</dbReference>
<dbReference type="GO" id="GO:0009103">
    <property type="term" value="P:lipopolysaccharide biosynthetic process"/>
    <property type="evidence" value="ECO:0007669"/>
    <property type="project" value="UniProtKB-UniRule"/>
</dbReference>
<dbReference type="GO" id="GO:0000271">
    <property type="term" value="P:polysaccharide biosynthetic process"/>
    <property type="evidence" value="ECO:0000318"/>
    <property type="project" value="GO_Central"/>
</dbReference>
<dbReference type="GO" id="GO:0046677">
    <property type="term" value="P:response to antibiotic"/>
    <property type="evidence" value="ECO:0007669"/>
    <property type="project" value="UniProtKB-KW"/>
</dbReference>
<dbReference type="CDD" id="cd00616">
    <property type="entry name" value="AHBA_syn"/>
    <property type="match status" value="1"/>
</dbReference>
<dbReference type="FunFam" id="3.40.640.10:FF:000040">
    <property type="entry name" value="UDP-4-amino-4-deoxy-L-arabinose--oxoglutarate aminotransferase"/>
    <property type="match status" value="1"/>
</dbReference>
<dbReference type="FunFam" id="3.90.1150.10:FF:000030">
    <property type="entry name" value="UDP-4-amino-4-deoxy-L-arabinose--oxoglutarate aminotransferase"/>
    <property type="match status" value="1"/>
</dbReference>
<dbReference type="Gene3D" id="3.90.1150.10">
    <property type="entry name" value="Aspartate Aminotransferase, domain 1"/>
    <property type="match status" value="1"/>
</dbReference>
<dbReference type="Gene3D" id="3.40.640.10">
    <property type="entry name" value="Type I PLP-dependent aspartate aminotransferase-like (Major domain)"/>
    <property type="match status" value="1"/>
</dbReference>
<dbReference type="HAMAP" id="MF_01167">
    <property type="entry name" value="ArnB_transfer"/>
    <property type="match status" value="1"/>
</dbReference>
<dbReference type="InterPro" id="IPR022850">
    <property type="entry name" value="ArnB_NH2Trfase"/>
</dbReference>
<dbReference type="InterPro" id="IPR000653">
    <property type="entry name" value="DegT/StrS_aminotransferase"/>
</dbReference>
<dbReference type="InterPro" id="IPR015424">
    <property type="entry name" value="PyrdxlP-dep_Trfase"/>
</dbReference>
<dbReference type="InterPro" id="IPR015421">
    <property type="entry name" value="PyrdxlP-dep_Trfase_major"/>
</dbReference>
<dbReference type="InterPro" id="IPR015422">
    <property type="entry name" value="PyrdxlP-dep_Trfase_small"/>
</dbReference>
<dbReference type="NCBIfam" id="NF008658">
    <property type="entry name" value="PRK11658.1"/>
    <property type="match status" value="1"/>
</dbReference>
<dbReference type="PANTHER" id="PTHR30244">
    <property type="entry name" value="TRANSAMINASE"/>
    <property type="match status" value="1"/>
</dbReference>
<dbReference type="PANTHER" id="PTHR30244:SF41">
    <property type="entry name" value="UDP-4-AMINO-4-DEOXY-L-ARABINOSE--OXOGLUTARATE AMINOTRANSFERASE"/>
    <property type="match status" value="1"/>
</dbReference>
<dbReference type="Pfam" id="PF01041">
    <property type="entry name" value="DegT_DnrJ_EryC1"/>
    <property type="match status" value="1"/>
</dbReference>
<dbReference type="PIRSF" id="PIRSF000390">
    <property type="entry name" value="PLP_StrS"/>
    <property type="match status" value="1"/>
</dbReference>
<dbReference type="SUPFAM" id="SSF53383">
    <property type="entry name" value="PLP-dependent transferases"/>
    <property type="match status" value="1"/>
</dbReference>
<sequence>MAEGKMMSDFLPFSRPAMGAEELAAVKTVLDSGWITTGPKNQELEAAFCRLTGNQYAVAVSSATAGMHIALMALGIGEGDEVITPSMTWVSTLNMIVLLGANPVMVDVDRDTLMVTPEHIEAAITPQTKAIIPVHYAGAPADLDAIYALGERYGIPVIEDAAHATGTSYKGRHIGARGTAIFSFHAIKNITCAEGGIVVTDNPQFADKLRSLKFHGLGVDAWDRQSGGRAPQAEVLAPGYKYNLPDLNAAIALAQLQKLDALNARRAAIAAQYHQAMADLPFQPLSLPSWEHIHAWHLFIIRVDEARCGITRDALMASLKTKGIGTGLHFRAAHTQKYYRERFPTLTLPDTEWNSERICSLPLFPDMTESDFDRVITALHQIAGQ</sequence>
<organism>
    <name type="scientific">Salmonella typhimurium (strain LT2 / SGSC1412 / ATCC 700720)</name>
    <dbReference type="NCBI Taxonomy" id="99287"/>
    <lineage>
        <taxon>Bacteria</taxon>
        <taxon>Pseudomonadati</taxon>
        <taxon>Pseudomonadota</taxon>
        <taxon>Gammaproteobacteria</taxon>
        <taxon>Enterobacterales</taxon>
        <taxon>Enterobacteriaceae</taxon>
        <taxon>Salmonella</taxon>
    </lineage>
</organism>